<sequence length="331" mass="37543">MAVFTTVSQDEIARWLLDFNLGEVRELRGIASGIENSNFFLTTEHDGQTRQYVLTIFERLTFAQLPYYLHLMAHLAERGIRVPAPIPARDGEILRPLKGKPATIVTRLPGASQLAPDAQHCAEVGDMLARMHLAGQDYPRQQPNLRSLPWWRQTEPEILPFLDAGQRALLQQEIAHQAAFFASTDYAGLGSGPCHCDLFRDNALFEEDGSGRHRLGGFFDFYFAGNDKWLFDVAVTVNDWCIDLASGELDPARTQALLRAYHAVRPLTATEAAHWQDMLRAGALRFWVSRLWDFYLPREADMLQPHDPTHFERILRRRIGADPASAPLPWI</sequence>
<dbReference type="EC" id="2.7.1.39" evidence="1"/>
<dbReference type="EMBL" id="AM260479">
    <property type="protein sequence ID" value="CAJ93823.1"/>
    <property type="molecule type" value="Genomic_DNA"/>
</dbReference>
<dbReference type="RefSeq" id="WP_010813653.1">
    <property type="nucleotide sequence ID" value="NZ_CP039287.1"/>
</dbReference>
<dbReference type="SMR" id="Q0K848"/>
<dbReference type="STRING" id="381666.H16_A2744"/>
<dbReference type="KEGG" id="reh:H16_A2744"/>
<dbReference type="eggNOG" id="COG2334">
    <property type="taxonomic scope" value="Bacteria"/>
</dbReference>
<dbReference type="HOGENOM" id="CLU_053300_0_0_4"/>
<dbReference type="OrthoDB" id="9777460at2"/>
<dbReference type="UniPathway" id="UPA00050">
    <property type="reaction ID" value="UER00064"/>
</dbReference>
<dbReference type="Proteomes" id="UP000008210">
    <property type="component" value="Chromosome 1"/>
</dbReference>
<dbReference type="GO" id="GO:0005524">
    <property type="term" value="F:ATP binding"/>
    <property type="evidence" value="ECO:0007669"/>
    <property type="project" value="UniProtKB-KW"/>
</dbReference>
<dbReference type="GO" id="GO:0004413">
    <property type="term" value="F:homoserine kinase activity"/>
    <property type="evidence" value="ECO:0007669"/>
    <property type="project" value="UniProtKB-UniRule"/>
</dbReference>
<dbReference type="GO" id="GO:0009088">
    <property type="term" value="P:threonine biosynthetic process"/>
    <property type="evidence" value="ECO:0007669"/>
    <property type="project" value="UniProtKB-UniRule"/>
</dbReference>
<dbReference type="CDD" id="cd05153">
    <property type="entry name" value="HomoserineK_II"/>
    <property type="match status" value="1"/>
</dbReference>
<dbReference type="Gene3D" id="3.90.1200.10">
    <property type="match status" value="1"/>
</dbReference>
<dbReference type="Gene3D" id="3.30.200.20">
    <property type="entry name" value="Phosphorylase Kinase, domain 1"/>
    <property type="match status" value="1"/>
</dbReference>
<dbReference type="HAMAP" id="MF_00301">
    <property type="entry name" value="Homoser_kinase_2"/>
    <property type="match status" value="1"/>
</dbReference>
<dbReference type="InterPro" id="IPR002575">
    <property type="entry name" value="Aminoglycoside_PTrfase"/>
</dbReference>
<dbReference type="InterPro" id="IPR005280">
    <property type="entry name" value="Homoserine_kinase_II"/>
</dbReference>
<dbReference type="InterPro" id="IPR011009">
    <property type="entry name" value="Kinase-like_dom_sf"/>
</dbReference>
<dbReference type="InterPro" id="IPR050249">
    <property type="entry name" value="Pseudomonas-type_ThrB"/>
</dbReference>
<dbReference type="NCBIfam" id="NF003558">
    <property type="entry name" value="PRK05231.1"/>
    <property type="match status" value="1"/>
</dbReference>
<dbReference type="NCBIfam" id="TIGR00938">
    <property type="entry name" value="thrB_alt"/>
    <property type="match status" value="1"/>
</dbReference>
<dbReference type="PANTHER" id="PTHR21064:SF6">
    <property type="entry name" value="AMINOGLYCOSIDE PHOSPHOTRANSFERASE DOMAIN-CONTAINING PROTEIN"/>
    <property type="match status" value="1"/>
</dbReference>
<dbReference type="PANTHER" id="PTHR21064">
    <property type="entry name" value="AMINOGLYCOSIDE PHOSPHOTRANSFERASE DOMAIN-CONTAINING PROTEIN-RELATED"/>
    <property type="match status" value="1"/>
</dbReference>
<dbReference type="Pfam" id="PF01636">
    <property type="entry name" value="APH"/>
    <property type="match status" value="1"/>
</dbReference>
<dbReference type="SUPFAM" id="SSF56112">
    <property type="entry name" value="Protein kinase-like (PK-like)"/>
    <property type="match status" value="1"/>
</dbReference>
<comment type="catalytic activity">
    <reaction evidence="1">
        <text>L-homoserine + ATP = O-phospho-L-homoserine + ADP + H(+)</text>
        <dbReference type="Rhea" id="RHEA:13985"/>
        <dbReference type="ChEBI" id="CHEBI:15378"/>
        <dbReference type="ChEBI" id="CHEBI:30616"/>
        <dbReference type="ChEBI" id="CHEBI:57476"/>
        <dbReference type="ChEBI" id="CHEBI:57590"/>
        <dbReference type="ChEBI" id="CHEBI:456216"/>
        <dbReference type="EC" id="2.7.1.39"/>
    </reaction>
</comment>
<comment type="pathway">
    <text evidence="1">Amino-acid biosynthesis; L-threonine biosynthesis; L-threonine from L-aspartate: step 4/5.</text>
</comment>
<comment type="similarity">
    <text evidence="1">Belongs to the pseudomonas-type ThrB family.</text>
</comment>
<keyword id="KW-0028">Amino-acid biosynthesis</keyword>
<keyword id="KW-0067">ATP-binding</keyword>
<keyword id="KW-0418">Kinase</keyword>
<keyword id="KW-0547">Nucleotide-binding</keyword>
<keyword id="KW-1185">Reference proteome</keyword>
<keyword id="KW-0791">Threonine biosynthesis</keyword>
<keyword id="KW-0808">Transferase</keyword>
<protein>
    <recommendedName>
        <fullName evidence="1">Homoserine kinase</fullName>
        <shortName evidence="1">HK</shortName>
        <shortName evidence="1">HSK</shortName>
        <ecNumber evidence="1">2.7.1.39</ecNumber>
    </recommendedName>
</protein>
<accession>Q0K848</accession>
<organism>
    <name type="scientific">Cupriavidus necator (strain ATCC 17699 / DSM 428 / KCTC 22496 / NCIMB 10442 / H16 / Stanier 337)</name>
    <name type="common">Ralstonia eutropha</name>
    <dbReference type="NCBI Taxonomy" id="381666"/>
    <lineage>
        <taxon>Bacteria</taxon>
        <taxon>Pseudomonadati</taxon>
        <taxon>Pseudomonadota</taxon>
        <taxon>Betaproteobacteria</taxon>
        <taxon>Burkholderiales</taxon>
        <taxon>Burkholderiaceae</taxon>
        <taxon>Cupriavidus</taxon>
    </lineage>
</organism>
<proteinExistence type="inferred from homology"/>
<feature type="chain" id="PRO_0000300798" description="Homoserine kinase">
    <location>
        <begin position="1"/>
        <end position="331"/>
    </location>
</feature>
<reference key="1">
    <citation type="journal article" date="2006" name="Nat. Biotechnol.">
        <title>Genome sequence of the bioplastic-producing 'Knallgas' bacterium Ralstonia eutropha H16.</title>
        <authorList>
            <person name="Pohlmann A."/>
            <person name="Fricke W.F."/>
            <person name="Reinecke F."/>
            <person name="Kusian B."/>
            <person name="Liesegang H."/>
            <person name="Cramm R."/>
            <person name="Eitinger T."/>
            <person name="Ewering C."/>
            <person name="Poetter M."/>
            <person name="Schwartz E."/>
            <person name="Strittmatter A."/>
            <person name="Voss I."/>
            <person name="Gottschalk G."/>
            <person name="Steinbuechel A."/>
            <person name="Friedrich B."/>
            <person name="Bowien B."/>
        </authorList>
    </citation>
    <scope>NUCLEOTIDE SEQUENCE [LARGE SCALE GENOMIC DNA]</scope>
    <source>
        <strain>ATCC 17699 / DSM 428 / KCTC 22496 / NCIMB 10442 / H16 / Stanier 337</strain>
    </source>
</reference>
<gene>
    <name evidence="1" type="primary">thrB</name>
    <name type="ordered locus">H16_A2744</name>
</gene>
<evidence type="ECO:0000255" key="1">
    <source>
        <dbReference type="HAMAP-Rule" id="MF_00301"/>
    </source>
</evidence>
<name>KHSE_CUPNH</name>